<evidence type="ECO:0000255" key="1">
    <source>
        <dbReference type="HAMAP-Rule" id="MF_00754"/>
    </source>
</evidence>
<gene>
    <name evidence="1" type="primary">rnp1</name>
    <name type="ordered locus">SSO0710</name>
</gene>
<keyword id="KW-0963">Cytoplasm</keyword>
<keyword id="KW-0255">Endonuclease</keyword>
<keyword id="KW-0378">Hydrolase</keyword>
<keyword id="KW-0540">Nuclease</keyword>
<keyword id="KW-1185">Reference proteome</keyword>
<keyword id="KW-0819">tRNA processing</keyword>
<organism>
    <name type="scientific">Saccharolobus solfataricus (strain ATCC 35092 / DSM 1617 / JCM 11322 / P2)</name>
    <name type="common">Sulfolobus solfataricus</name>
    <dbReference type="NCBI Taxonomy" id="273057"/>
    <lineage>
        <taxon>Archaea</taxon>
        <taxon>Thermoproteota</taxon>
        <taxon>Thermoprotei</taxon>
        <taxon>Sulfolobales</taxon>
        <taxon>Sulfolobaceae</taxon>
        <taxon>Saccharolobus</taxon>
    </lineage>
</organism>
<accession>P60833</accession>
<comment type="function">
    <text evidence="1">Part of ribonuclease P, a protein complex that generates mature tRNA molecules by cleaving their 5'-ends.</text>
</comment>
<comment type="catalytic activity">
    <reaction evidence="1">
        <text>Endonucleolytic cleavage of RNA, removing 5'-extranucleotides from tRNA precursor.</text>
        <dbReference type="EC" id="3.1.26.5"/>
    </reaction>
</comment>
<comment type="subunit">
    <text evidence="1">Consists of a catalytic RNA component and at least 4-5 protein subunits.</text>
</comment>
<comment type="subcellular location">
    <subcellularLocation>
        <location evidence="1">Cytoplasm</location>
    </subcellularLocation>
</comment>
<comment type="similarity">
    <text evidence="1">Belongs to the eukaryotic/archaeal RNase P protein component 1 family.</text>
</comment>
<reference key="1">
    <citation type="journal article" date="2001" name="Proc. Natl. Acad. Sci. U.S.A.">
        <title>The complete genome of the crenarchaeon Sulfolobus solfataricus P2.</title>
        <authorList>
            <person name="She Q."/>
            <person name="Singh R.K."/>
            <person name="Confalonieri F."/>
            <person name="Zivanovic Y."/>
            <person name="Allard G."/>
            <person name="Awayez M.J."/>
            <person name="Chan-Weiher C.C.-Y."/>
            <person name="Clausen I.G."/>
            <person name="Curtis B.A."/>
            <person name="De Moors A."/>
            <person name="Erauso G."/>
            <person name="Fletcher C."/>
            <person name="Gordon P.M.K."/>
            <person name="Heikamp-de Jong I."/>
            <person name="Jeffries A.C."/>
            <person name="Kozera C.J."/>
            <person name="Medina N."/>
            <person name="Peng X."/>
            <person name="Thi-Ngoc H.P."/>
            <person name="Redder P."/>
            <person name="Schenk M.E."/>
            <person name="Theriault C."/>
            <person name="Tolstrup N."/>
            <person name="Charlebois R.L."/>
            <person name="Doolittle W.F."/>
            <person name="Duguet M."/>
            <person name="Gaasterland T."/>
            <person name="Garrett R.A."/>
            <person name="Ragan M.A."/>
            <person name="Sensen C.W."/>
            <person name="Van der Oost J."/>
        </authorList>
    </citation>
    <scope>NUCLEOTIDE SEQUENCE [LARGE SCALE GENOMIC DNA]</scope>
    <source>
        <strain>ATCC 35092 / DSM 1617 / JCM 11322 / P2</strain>
    </source>
</reference>
<reference key="2">
    <citation type="unpublished observations" date="2004-03">
        <authorList>
            <person name="Coudert E."/>
        </authorList>
    </citation>
    <scope>IDENTIFICATION</scope>
</reference>
<name>RNP1_SACS2</name>
<sequence length="79" mass="9506">MILDYINSRIKILWYTDPFLISREGVIVLETEKTFLIKLEEKNKFIRIFKAHGIFEITFKGKSFIIAGYKLVRKPWKRI</sequence>
<feature type="chain" id="PRO_0000128439" description="Ribonuclease P protein component 1">
    <location>
        <begin position="1"/>
        <end position="79"/>
    </location>
</feature>
<protein>
    <recommendedName>
        <fullName evidence="1">Ribonuclease P protein component 1</fullName>
        <shortName evidence="1">RNase P component 1</shortName>
        <ecNumber evidence="1">3.1.26.5</ecNumber>
    </recommendedName>
    <alternativeName>
        <fullName evidence="1">Rpp29</fullName>
    </alternativeName>
</protein>
<dbReference type="EC" id="3.1.26.5" evidence="1"/>
<dbReference type="EMBL" id="AE006641">
    <property type="status" value="NOT_ANNOTATED_CDS"/>
    <property type="molecule type" value="Genomic_DNA"/>
</dbReference>
<dbReference type="RefSeq" id="WP_009991273.1">
    <property type="nucleotide sequence ID" value="NC_002754.1"/>
</dbReference>
<dbReference type="SMR" id="P60833"/>
<dbReference type="InParanoid" id="P60833"/>
<dbReference type="Proteomes" id="UP000001974">
    <property type="component" value="Chromosome"/>
</dbReference>
<dbReference type="GO" id="GO:0005737">
    <property type="term" value="C:cytoplasm"/>
    <property type="evidence" value="ECO:0007669"/>
    <property type="project" value="UniProtKB-SubCell"/>
</dbReference>
<dbReference type="GO" id="GO:0030677">
    <property type="term" value="C:ribonuclease P complex"/>
    <property type="evidence" value="ECO:0007669"/>
    <property type="project" value="UniProtKB-UniRule"/>
</dbReference>
<dbReference type="GO" id="GO:0004526">
    <property type="term" value="F:ribonuclease P activity"/>
    <property type="evidence" value="ECO:0007669"/>
    <property type="project" value="UniProtKB-UniRule"/>
</dbReference>
<dbReference type="GO" id="GO:0003723">
    <property type="term" value="F:RNA binding"/>
    <property type="evidence" value="ECO:0007669"/>
    <property type="project" value="InterPro"/>
</dbReference>
<dbReference type="GO" id="GO:0001682">
    <property type="term" value="P:tRNA 5'-leader removal"/>
    <property type="evidence" value="ECO:0007669"/>
    <property type="project" value="UniProtKB-UniRule"/>
</dbReference>
<dbReference type="Gene3D" id="2.30.30.210">
    <property type="entry name" value="Ribonuclease P/MRP, subunit p29"/>
    <property type="match status" value="1"/>
</dbReference>
<dbReference type="HAMAP" id="MF_00754">
    <property type="entry name" value="RNase_P_1"/>
    <property type="match status" value="1"/>
</dbReference>
<dbReference type="InterPro" id="IPR036980">
    <property type="entry name" value="RNase_P/MRP_Rpp29_sf"/>
</dbReference>
<dbReference type="InterPro" id="IPR023538">
    <property type="entry name" value="RNP1"/>
</dbReference>
<dbReference type="InterPro" id="IPR023534">
    <property type="entry name" value="Rof/RNase_P-like"/>
</dbReference>
<dbReference type="InterPro" id="IPR002730">
    <property type="entry name" value="Rpp29/RNP1"/>
</dbReference>
<dbReference type="Pfam" id="PF01868">
    <property type="entry name" value="RNase_P-MRP_p29"/>
    <property type="match status" value="1"/>
</dbReference>
<dbReference type="SUPFAM" id="SSF101744">
    <property type="entry name" value="Rof/RNase P subunit-like"/>
    <property type="match status" value="1"/>
</dbReference>
<proteinExistence type="inferred from homology"/>